<reference key="1">
    <citation type="submission" date="2007-04" db="EMBL/GenBank/DDBJ databases">
        <title>Complete sequence of Pseudomonas mendocina ymp.</title>
        <authorList>
            <consortium name="US DOE Joint Genome Institute"/>
            <person name="Copeland A."/>
            <person name="Lucas S."/>
            <person name="Lapidus A."/>
            <person name="Barry K."/>
            <person name="Glavina del Rio T."/>
            <person name="Dalin E."/>
            <person name="Tice H."/>
            <person name="Pitluck S."/>
            <person name="Kiss H."/>
            <person name="Brettin T."/>
            <person name="Detter J.C."/>
            <person name="Bruce D."/>
            <person name="Han C."/>
            <person name="Schmutz J."/>
            <person name="Larimer F."/>
            <person name="Land M."/>
            <person name="Hauser L."/>
            <person name="Kyrpides N."/>
            <person name="Mikhailova N."/>
            <person name="Hersman L."/>
            <person name="Dubois J."/>
            <person name="Maurice P."/>
            <person name="Richardson P."/>
        </authorList>
    </citation>
    <scope>NUCLEOTIDE SEQUENCE [LARGE SCALE GENOMIC DNA]</scope>
    <source>
        <strain>ymp</strain>
    </source>
</reference>
<proteinExistence type="inferred from homology"/>
<comment type="function">
    <text evidence="1">Required for rescue of stalled ribosomes mediated by trans-translation. Binds to transfer-messenger RNA (tmRNA), required for stable association of tmRNA with ribosomes. tmRNA and SmpB together mimic tRNA shape, replacing the anticodon stem-loop with SmpB. tmRNA is encoded by the ssrA gene; the 2 termini fold to resemble tRNA(Ala) and it encodes a 'tag peptide', a short internal open reading frame. During trans-translation Ala-aminoacylated tmRNA acts like a tRNA, entering the A-site of stalled ribosomes, displacing the stalled mRNA. The ribosome then switches to translate the ORF on the tmRNA; the nascent peptide is terminated with the 'tag peptide' encoded by the tmRNA and targeted for degradation. The ribosome is freed to recommence translation, which seems to be the essential function of trans-translation.</text>
</comment>
<comment type="subcellular location">
    <subcellularLocation>
        <location evidence="1">Cytoplasm</location>
    </subcellularLocation>
    <text evidence="1">The tmRNA-SmpB complex associates with stalled 70S ribosomes.</text>
</comment>
<comment type="similarity">
    <text evidence="1">Belongs to the SmpB family.</text>
</comment>
<comment type="sequence caution" evidence="3">
    <conflict type="erroneous initiation">
        <sequence resource="EMBL-CDS" id="ABP86380"/>
    </conflict>
    <text>Extended N-terminus.</text>
</comment>
<protein>
    <recommendedName>
        <fullName evidence="1">SsrA-binding protein</fullName>
    </recommendedName>
    <alternativeName>
        <fullName evidence="1">Small protein B</fullName>
    </alternativeName>
</protein>
<accession>A4XYG4</accession>
<keyword id="KW-0963">Cytoplasm</keyword>
<keyword id="KW-0694">RNA-binding</keyword>
<evidence type="ECO:0000255" key="1">
    <source>
        <dbReference type="HAMAP-Rule" id="MF_00023"/>
    </source>
</evidence>
<evidence type="ECO:0000256" key="2">
    <source>
        <dbReference type="SAM" id="MobiDB-lite"/>
    </source>
</evidence>
<evidence type="ECO:0000305" key="3"/>
<organism>
    <name type="scientific">Ectopseudomonas mendocina (strain ymp)</name>
    <name type="common">Pseudomonas mendocina</name>
    <dbReference type="NCBI Taxonomy" id="399739"/>
    <lineage>
        <taxon>Bacteria</taxon>
        <taxon>Pseudomonadati</taxon>
        <taxon>Pseudomonadota</taxon>
        <taxon>Gammaproteobacteria</taxon>
        <taxon>Pseudomonadales</taxon>
        <taxon>Pseudomonadaceae</taxon>
        <taxon>Ectopseudomonas</taxon>
    </lineage>
</organism>
<sequence>MAKQKKHPQGTIALNKKALHDYFVEQKFEAGVALAGWEVKSLRAGKAQLVDSYVLLKDDEAWLMGAHITPLKTASTHVIADPIRTRKLLLHKRELDKLFGAVQQKGYTCVALSLYWKQHLVKCEIALAKGKKDFDKRHVEKERDANREVQRAMRSKGKDD</sequence>
<dbReference type="EMBL" id="CP000680">
    <property type="protein sequence ID" value="ABP86380.1"/>
    <property type="status" value="ALT_INIT"/>
    <property type="molecule type" value="Genomic_DNA"/>
</dbReference>
<dbReference type="SMR" id="A4XYG4"/>
<dbReference type="STRING" id="399739.Pmen_3632"/>
<dbReference type="KEGG" id="pmy:Pmen_3632"/>
<dbReference type="PATRIC" id="fig|399739.8.peg.3681"/>
<dbReference type="eggNOG" id="COG0691">
    <property type="taxonomic scope" value="Bacteria"/>
</dbReference>
<dbReference type="HOGENOM" id="CLU_108953_3_0_6"/>
<dbReference type="OrthoDB" id="9805462at2"/>
<dbReference type="GO" id="GO:0005829">
    <property type="term" value="C:cytosol"/>
    <property type="evidence" value="ECO:0007669"/>
    <property type="project" value="TreeGrafter"/>
</dbReference>
<dbReference type="GO" id="GO:0003723">
    <property type="term" value="F:RNA binding"/>
    <property type="evidence" value="ECO:0007669"/>
    <property type="project" value="UniProtKB-UniRule"/>
</dbReference>
<dbReference type="GO" id="GO:0070929">
    <property type="term" value="P:trans-translation"/>
    <property type="evidence" value="ECO:0007669"/>
    <property type="project" value="UniProtKB-UniRule"/>
</dbReference>
<dbReference type="CDD" id="cd09294">
    <property type="entry name" value="SmpB"/>
    <property type="match status" value="1"/>
</dbReference>
<dbReference type="Gene3D" id="2.40.280.10">
    <property type="match status" value="1"/>
</dbReference>
<dbReference type="HAMAP" id="MF_00023">
    <property type="entry name" value="SmpB"/>
    <property type="match status" value="1"/>
</dbReference>
<dbReference type="InterPro" id="IPR023620">
    <property type="entry name" value="SmpB"/>
</dbReference>
<dbReference type="InterPro" id="IPR000037">
    <property type="entry name" value="SsrA-bd_prot"/>
</dbReference>
<dbReference type="InterPro" id="IPR020081">
    <property type="entry name" value="SsrA-bd_prot_CS"/>
</dbReference>
<dbReference type="NCBIfam" id="NF003843">
    <property type="entry name" value="PRK05422.1"/>
    <property type="match status" value="1"/>
</dbReference>
<dbReference type="NCBIfam" id="TIGR00086">
    <property type="entry name" value="smpB"/>
    <property type="match status" value="1"/>
</dbReference>
<dbReference type="PANTHER" id="PTHR30308:SF2">
    <property type="entry name" value="SSRA-BINDING PROTEIN"/>
    <property type="match status" value="1"/>
</dbReference>
<dbReference type="PANTHER" id="PTHR30308">
    <property type="entry name" value="TMRNA-BINDING COMPONENT OF TRANS-TRANSLATION TAGGING COMPLEX"/>
    <property type="match status" value="1"/>
</dbReference>
<dbReference type="Pfam" id="PF01668">
    <property type="entry name" value="SmpB"/>
    <property type="match status" value="1"/>
</dbReference>
<dbReference type="SUPFAM" id="SSF74982">
    <property type="entry name" value="Small protein B (SmpB)"/>
    <property type="match status" value="1"/>
</dbReference>
<dbReference type="PROSITE" id="PS01317">
    <property type="entry name" value="SSRP"/>
    <property type="match status" value="1"/>
</dbReference>
<gene>
    <name evidence="1" type="primary">smpB</name>
    <name type="ordered locus">Pmen_3632</name>
</gene>
<feature type="chain" id="PRO_0000331081" description="SsrA-binding protein">
    <location>
        <begin position="1"/>
        <end position="160"/>
    </location>
</feature>
<feature type="region of interest" description="Disordered" evidence="2">
    <location>
        <begin position="136"/>
        <end position="160"/>
    </location>
</feature>
<name>SSRP_ECTM1</name>